<gene>
    <name evidence="1" type="primary">nudC</name>
    <name type="ordered locus">ECSE_4284</name>
</gene>
<sequence>MDRIIEKLDHGWWVVSHEQKLWLPKGELPYGEAANFDLVGQRALQIGEWQGEPVWLVQQQRRHDMGSVRQVIDLDVGLFQLAGRGVQLAEFYRSHKYCGYCGHEMYPSKTEWAMLCSHCRERYYPQIAPCIIVAIRRDDSILLAQHTRHRNGVHTVLAGFVEVGETLEQAVAREVMEESGIKVKNLRYVTSQPWPFPQSLMTAFMAEYDSGDIVIDPKELLEANWYRYDDLPLLPPPGTVARRLIEDTVAMCRAEYE</sequence>
<name>NUDC_ECOSE</name>
<dbReference type="EC" id="3.6.1.-" evidence="1"/>
<dbReference type="EC" id="3.6.1.22" evidence="1"/>
<dbReference type="EMBL" id="AP009240">
    <property type="protein sequence ID" value="BAG79808.1"/>
    <property type="molecule type" value="Genomic_DNA"/>
</dbReference>
<dbReference type="RefSeq" id="WP_000373940.1">
    <property type="nucleotide sequence ID" value="NC_011415.1"/>
</dbReference>
<dbReference type="SMR" id="B6I5K7"/>
<dbReference type="GeneID" id="93777898"/>
<dbReference type="KEGG" id="ecy:ECSE_4284"/>
<dbReference type="HOGENOM" id="CLU_037162_0_1_6"/>
<dbReference type="Proteomes" id="UP000008199">
    <property type="component" value="Chromosome"/>
</dbReference>
<dbReference type="GO" id="GO:0005829">
    <property type="term" value="C:cytosol"/>
    <property type="evidence" value="ECO:0007669"/>
    <property type="project" value="TreeGrafter"/>
</dbReference>
<dbReference type="GO" id="GO:0000287">
    <property type="term" value="F:magnesium ion binding"/>
    <property type="evidence" value="ECO:0007669"/>
    <property type="project" value="UniProtKB-UniRule"/>
</dbReference>
<dbReference type="GO" id="GO:0030145">
    <property type="term" value="F:manganese ion binding"/>
    <property type="evidence" value="ECO:0007669"/>
    <property type="project" value="UniProtKB-UniRule"/>
</dbReference>
<dbReference type="GO" id="GO:0000210">
    <property type="term" value="F:NAD+ diphosphatase activity"/>
    <property type="evidence" value="ECO:0007669"/>
    <property type="project" value="UniProtKB-UniRule"/>
</dbReference>
<dbReference type="GO" id="GO:0035529">
    <property type="term" value="F:NADH pyrophosphatase activity"/>
    <property type="evidence" value="ECO:0007669"/>
    <property type="project" value="TreeGrafter"/>
</dbReference>
<dbReference type="GO" id="GO:0110153">
    <property type="term" value="F:RNA NAD-cap (NMN-forming) hydrolase activity"/>
    <property type="evidence" value="ECO:0007669"/>
    <property type="project" value="RHEA"/>
</dbReference>
<dbReference type="GO" id="GO:0008270">
    <property type="term" value="F:zinc ion binding"/>
    <property type="evidence" value="ECO:0007669"/>
    <property type="project" value="UniProtKB-UniRule"/>
</dbReference>
<dbReference type="GO" id="GO:0019677">
    <property type="term" value="P:NAD catabolic process"/>
    <property type="evidence" value="ECO:0007669"/>
    <property type="project" value="TreeGrafter"/>
</dbReference>
<dbReference type="GO" id="GO:0006734">
    <property type="term" value="P:NADH metabolic process"/>
    <property type="evidence" value="ECO:0007669"/>
    <property type="project" value="TreeGrafter"/>
</dbReference>
<dbReference type="GO" id="GO:0006742">
    <property type="term" value="P:NADP catabolic process"/>
    <property type="evidence" value="ECO:0007669"/>
    <property type="project" value="TreeGrafter"/>
</dbReference>
<dbReference type="CDD" id="cd03429">
    <property type="entry name" value="NUDIX_NADH_pyrophosphatase_Nudt13"/>
    <property type="match status" value="1"/>
</dbReference>
<dbReference type="FunFam" id="3.90.79.10:FF:000004">
    <property type="entry name" value="NADH pyrophosphatase"/>
    <property type="match status" value="1"/>
</dbReference>
<dbReference type="FunFam" id="3.90.79.20:FF:000001">
    <property type="entry name" value="NADH pyrophosphatase"/>
    <property type="match status" value="1"/>
</dbReference>
<dbReference type="Gene3D" id="3.90.79.20">
    <property type="match status" value="1"/>
</dbReference>
<dbReference type="Gene3D" id="3.90.79.10">
    <property type="entry name" value="Nucleoside Triphosphate Pyrophosphohydrolase"/>
    <property type="match status" value="1"/>
</dbReference>
<dbReference type="HAMAP" id="MF_00297">
    <property type="entry name" value="Nudix_NudC"/>
    <property type="match status" value="1"/>
</dbReference>
<dbReference type="InterPro" id="IPR050241">
    <property type="entry name" value="NAD-cap_RNA_hydrolase_NudC"/>
</dbReference>
<dbReference type="InterPro" id="IPR049734">
    <property type="entry name" value="NudC-like_C"/>
</dbReference>
<dbReference type="InterPro" id="IPR015797">
    <property type="entry name" value="NUDIX_hydrolase-like_dom_sf"/>
</dbReference>
<dbReference type="InterPro" id="IPR020084">
    <property type="entry name" value="NUDIX_hydrolase_CS"/>
</dbReference>
<dbReference type="InterPro" id="IPR000086">
    <property type="entry name" value="NUDIX_hydrolase_dom"/>
</dbReference>
<dbReference type="InterPro" id="IPR022925">
    <property type="entry name" value="RNA_Hydrolase_NudC"/>
</dbReference>
<dbReference type="InterPro" id="IPR015376">
    <property type="entry name" value="Znr_NADH_PPase"/>
</dbReference>
<dbReference type="NCBIfam" id="NF001299">
    <property type="entry name" value="PRK00241.1"/>
    <property type="match status" value="1"/>
</dbReference>
<dbReference type="PANTHER" id="PTHR42904:SF6">
    <property type="entry name" value="NAD-CAPPED RNA HYDROLASE NUDT12"/>
    <property type="match status" value="1"/>
</dbReference>
<dbReference type="PANTHER" id="PTHR42904">
    <property type="entry name" value="NUDIX HYDROLASE, NUDC SUBFAMILY"/>
    <property type="match status" value="1"/>
</dbReference>
<dbReference type="Pfam" id="PF00293">
    <property type="entry name" value="NUDIX"/>
    <property type="match status" value="1"/>
</dbReference>
<dbReference type="Pfam" id="PF09297">
    <property type="entry name" value="Zn_ribbon_NUD"/>
    <property type="match status" value="1"/>
</dbReference>
<dbReference type="SUPFAM" id="SSF55811">
    <property type="entry name" value="Nudix"/>
    <property type="match status" value="2"/>
</dbReference>
<dbReference type="PROSITE" id="PS51462">
    <property type="entry name" value="NUDIX"/>
    <property type="match status" value="1"/>
</dbReference>
<dbReference type="PROSITE" id="PS00893">
    <property type="entry name" value="NUDIX_BOX"/>
    <property type="match status" value="1"/>
</dbReference>
<accession>B6I5K7</accession>
<protein>
    <recommendedName>
        <fullName evidence="1">NAD-capped RNA hydrolase NudC</fullName>
        <shortName evidence="1">DeNADding enzyme NudC</shortName>
        <ecNumber evidence="1">3.6.1.-</ecNumber>
    </recommendedName>
    <alternativeName>
        <fullName evidence="1">NADH pyrophosphatase</fullName>
        <ecNumber evidence="1">3.6.1.22</ecNumber>
    </alternativeName>
</protein>
<evidence type="ECO:0000255" key="1">
    <source>
        <dbReference type="HAMAP-Rule" id="MF_00297"/>
    </source>
</evidence>
<organism>
    <name type="scientific">Escherichia coli (strain SE11)</name>
    <dbReference type="NCBI Taxonomy" id="409438"/>
    <lineage>
        <taxon>Bacteria</taxon>
        <taxon>Pseudomonadati</taxon>
        <taxon>Pseudomonadota</taxon>
        <taxon>Gammaproteobacteria</taxon>
        <taxon>Enterobacterales</taxon>
        <taxon>Enterobacteriaceae</taxon>
        <taxon>Escherichia</taxon>
    </lineage>
</organism>
<comment type="function">
    <text evidence="1">mRNA decapping enzyme that specifically removes the nicotinamide adenine dinucleotide (NAD) cap from a subset of mRNAs by hydrolyzing the diphosphate linkage to produce nicotinamide mononucleotide (NMN) and 5' monophosphate mRNA. The NAD-cap is present at the 5'-end of some mRNAs and stabilizes RNA against 5'-processing. Has preference for mRNAs with a 5'-end purine. Catalyzes the hydrolysis of a broad range of dinucleotide pyrophosphates.</text>
</comment>
<comment type="catalytic activity">
    <reaction evidence="1">
        <text>a 5'-end NAD(+)-phospho-ribonucleoside in mRNA + H2O = a 5'-end phospho-adenosine-phospho-ribonucleoside in mRNA + beta-nicotinamide D-ribonucleotide + 2 H(+)</text>
        <dbReference type="Rhea" id="RHEA:60876"/>
        <dbReference type="Rhea" id="RHEA-COMP:15698"/>
        <dbReference type="Rhea" id="RHEA-COMP:15719"/>
        <dbReference type="ChEBI" id="CHEBI:14649"/>
        <dbReference type="ChEBI" id="CHEBI:15377"/>
        <dbReference type="ChEBI" id="CHEBI:15378"/>
        <dbReference type="ChEBI" id="CHEBI:144029"/>
        <dbReference type="ChEBI" id="CHEBI:144051"/>
    </reaction>
    <physiologicalReaction direction="left-to-right" evidence="1">
        <dbReference type="Rhea" id="RHEA:60877"/>
    </physiologicalReaction>
</comment>
<comment type="catalytic activity">
    <reaction evidence="1">
        <text>NAD(+) + H2O = beta-nicotinamide D-ribonucleotide + AMP + 2 H(+)</text>
        <dbReference type="Rhea" id="RHEA:11800"/>
        <dbReference type="ChEBI" id="CHEBI:14649"/>
        <dbReference type="ChEBI" id="CHEBI:15377"/>
        <dbReference type="ChEBI" id="CHEBI:15378"/>
        <dbReference type="ChEBI" id="CHEBI:57540"/>
        <dbReference type="ChEBI" id="CHEBI:456215"/>
        <dbReference type="EC" id="3.6.1.22"/>
    </reaction>
</comment>
<comment type="catalytic activity">
    <reaction evidence="1">
        <text>NADH + H2O = reduced beta-nicotinamide D-ribonucleotide + AMP + 2 H(+)</text>
        <dbReference type="Rhea" id="RHEA:48868"/>
        <dbReference type="ChEBI" id="CHEBI:15377"/>
        <dbReference type="ChEBI" id="CHEBI:15378"/>
        <dbReference type="ChEBI" id="CHEBI:57945"/>
        <dbReference type="ChEBI" id="CHEBI:90832"/>
        <dbReference type="ChEBI" id="CHEBI:456215"/>
        <dbReference type="EC" id="3.6.1.22"/>
    </reaction>
</comment>
<comment type="cofactor">
    <cofactor evidence="1">
        <name>Mg(2+)</name>
        <dbReference type="ChEBI" id="CHEBI:18420"/>
    </cofactor>
    <cofactor evidence="1">
        <name>Mn(2+)</name>
        <dbReference type="ChEBI" id="CHEBI:29035"/>
    </cofactor>
    <text evidence="1">Divalent metal cations. Mg(2+) or Mn(2+).</text>
</comment>
<comment type="cofactor">
    <cofactor evidence="1">
        <name>Zn(2+)</name>
        <dbReference type="ChEBI" id="CHEBI:29105"/>
    </cofactor>
    <text evidence="1">Binds 1 zinc ion per subunit.</text>
</comment>
<comment type="subunit">
    <text evidence="1">Homodimer.</text>
</comment>
<comment type="similarity">
    <text evidence="1">Belongs to the Nudix hydrolase family. NudC subfamily.</text>
</comment>
<keyword id="KW-0378">Hydrolase</keyword>
<keyword id="KW-0460">Magnesium</keyword>
<keyword id="KW-0464">Manganese</keyword>
<keyword id="KW-0479">Metal-binding</keyword>
<keyword id="KW-0520">NAD</keyword>
<keyword id="KW-0862">Zinc</keyword>
<feature type="chain" id="PRO_1000115242" description="NAD-capped RNA hydrolase NudC">
    <location>
        <begin position="1"/>
        <end position="257"/>
    </location>
</feature>
<feature type="domain" description="Nudix hydrolase" evidence="1">
    <location>
        <begin position="125"/>
        <end position="248"/>
    </location>
</feature>
<feature type="short sequence motif" description="Nudix box" evidence="1">
    <location>
        <begin position="159"/>
        <end position="180"/>
    </location>
</feature>
<feature type="binding site" evidence="1">
    <location>
        <position position="25"/>
    </location>
    <ligand>
        <name>substrate</name>
    </ligand>
</feature>
<feature type="binding site" evidence="1">
    <location>
        <position position="69"/>
    </location>
    <ligand>
        <name>substrate</name>
    </ligand>
</feature>
<feature type="binding site" evidence="1">
    <location>
        <position position="98"/>
    </location>
    <ligand>
        <name>Zn(2+)</name>
        <dbReference type="ChEBI" id="CHEBI:29105"/>
    </ligand>
</feature>
<feature type="binding site" evidence="1">
    <location>
        <position position="101"/>
    </location>
    <ligand>
        <name>Zn(2+)</name>
        <dbReference type="ChEBI" id="CHEBI:29105"/>
    </ligand>
</feature>
<feature type="binding site" evidence="1">
    <location>
        <position position="111"/>
    </location>
    <ligand>
        <name>substrate</name>
    </ligand>
</feature>
<feature type="binding site" evidence="1">
    <location>
        <position position="116"/>
    </location>
    <ligand>
        <name>Zn(2+)</name>
        <dbReference type="ChEBI" id="CHEBI:29105"/>
    </ligand>
</feature>
<feature type="binding site" evidence="1">
    <location>
        <position position="119"/>
    </location>
    <ligand>
        <name>Zn(2+)</name>
        <dbReference type="ChEBI" id="CHEBI:29105"/>
    </ligand>
</feature>
<feature type="binding site" evidence="1">
    <location>
        <position position="124"/>
    </location>
    <ligand>
        <name>substrate</name>
    </ligand>
</feature>
<feature type="binding site" evidence="1">
    <location>
        <position position="158"/>
    </location>
    <ligand>
        <name>a divalent metal cation</name>
        <dbReference type="ChEBI" id="CHEBI:60240"/>
        <label>1</label>
    </ligand>
</feature>
<feature type="binding site" evidence="1">
    <location>
        <position position="174"/>
    </location>
    <ligand>
        <name>a divalent metal cation</name>
        <dbReference type="ChEBI" id="CHEBI:60240"/>
        <label>2</label>
    </ligand>
</feature>
<feature type="binding site" evidence="1">
    <location>
        <position position="174"/>
    </location>
    <ligand>
        <name>a divalent metal cation</name>
        <dbReference type="ChEBI" id="CHEBI:60240"/>
        <label>3</label>
    </ligand>
</feature>
<feature type="binding site" evidence="1">
    <location>
        <position position="178"/>
    </location>
    <ligand>
        <name>a divalent metal cation</name>
        <dbReference type="ChEBI" id="CHEBI:60240"/>
        <label>1</label>
    </ligand>
</feature>
<feature type="binding site" evidence="1">
    <location>
        <position position="178"/>
    </location>
    <ligand>
        <name>a divalent metal cation</name>
        <dbReference type="ChEBI" id="CHEBI:60240"/>
        <label>3</label>
    </ligand>
</feature>
<feature type="binding site" evidence="1">
    <location>
        <begin position="192"/>
        <end position="199"/>
    </location>
    <ligand>
        <name>substrate</name>
    </ligand>
</feature>
<feature type="binding site" evidence="1">
    <location>
        <position position="219"/>
    </location>
    <ligand>
        <name>a divalent metal cation</name>
        <dbReference type="ChEBI" id="CHEBI:60240"/>
        <label>1</label>
    </ligand>
</feature>
<feature type="binding site" evidence="1">
    <location>
        <position position="219"/>
    </location>
    <ligand>
        <name>a divalent metal cation</name>
        <dbReference type="ChEBI" id="CHEBI:60240"/>
        <label>3</label>
    </ligand>
</feature>
<feature type="binding site" evidence="1">
    <location>
        <position position="241"/>
    </location>
    <ligand>
        <name>substrate</name>
    </ligand>
</feature>
<reference key="1">
    <citation type="journal article" date="2008" name="DNA Res.">
        <title>Complete genome sequence and comparative analysis of the wild-type commensal Escherichia coli strain SE11 isolated from a healthy adult.</title>
        <authorList>
            <person name="Oshima K."/>
            <person name="Toh H."/>
            <person name="Ogura Y."/>
            <person name="Sasamoto H."/>
            <person name="Morita H."/>
            <person name="Park S.-H."/>
            <person name="Ooka T."/>
            <person name="Iyoda S."/>
            <person name="Taylor T.D."/>
            <person name="Hayashi T."/>
            <person name="Itoh K."/>
            <person name="Hattori M."/>
        </authorList>
    </citation>
    <scope>NUCLEOTIDE SEQUENCE [LARGE SCALE GENOMIC DNA]</scope>
    <source>
        <strain>SE11</strain>
    </source>
</reference>
<proteinExistence type="inferred from homology"/>